<name>HPPK_STRPQ</name>
<dbReference type="EC" id="2.7.6.3" evidence="1"/>
<dbReference type="EMBL" id="BA000034">
    <property type="protein sequence ID" value="BAC64057.1"/>
    <property type="molecule type" value="Genomic_DNA"/>
</dbReference>
<dbReference type="RefSeq" id="WP_011054470.1">
    <property type="nucleotide sequence ID" value="NC_004606.1"/>
</dbReference>
<dbReference type="SMR" id="P0DB11"/>
<dbReference type="KEGG" id="sps:SPs0962"/>
<dbReference type="HOGENOM" id="CLU_097916_3_0_9"/>
<dbReference type="UniPathway" id="UPA00077">
    <property type="reaction ID" value="UER00155"/>
</dbReference>
<dbReference type="GO" id="GO:0003848">
    <property type="term" value="F:2-amino-4-hydroxy-6-hydroxymethyldihydropteridine diphosphokinase activity"/>
    <property type="evidence" value="ECO:0007669"/>
    <property type="project" value="UniProtKB-EC"/>
</dbReference>
<dbReference type="GO" id="GO:0005524">
    <property type="term" value="F:ATP binding"/>
    <property type="evidence" value="ECO:0007669"/>
    <property type="project" value="UniProtKB-KW"/>
</dbReference>
<dbReference type="GO" id="GO:0016301">
    <property type="term" value="F:kinase activity"/>
    <property type="evidence" value="ECO:0007669"/>
    <property type="project" value="UniProtKB-KW"/>
</dbReference>
<dbReference type="GO" id="GO:0046656">
    <property type="term" value="P:folic acid biosynthetic process"/>
    <property type="evidence" value="ECO:0007669"/>
    <property type="project" value="UniProtKB-KW"/>
</dbReference>
<dbReference type="GO" id="GO:0046654">
    <property type="term" value="P:tetrahydrofolate biosynthetic process"/>
    <property type="evidence" value="ECO:0007669"/>
    <property type="project" value="UniProtKB-UniPathway"/>
</dbReference>
<dbReference type="CDD" id="cd00483">
    <property type="entry name" value="HPPK"/>
    <property type="match status" value="1"/>
</dbReference>
<dbReference type="Gene3D" id="3.30.70.560">
    <property type="entry name" value="7,8-Dihydro-6-hydroxymethylpterin-pyrophosphokinase HPPK"/>
    <property type="match status" value="1"/>
</dbReference>
<dbReference type="InterPro" id="IPR000550">
    <property type="entry name" value="Hppk"/>
</dbReference>
<dbReference type="InterPro" id="IPR035907">
    <property type="entry name" value="Hppk_sf"/>
</dbReference>
<dbReference type="NCBIfam" id="TIGR01498">
    <property type="entry name" value="folK"/>
    <property type="match status" value="1"/>
</dbReference>
<dbReference type="PANTHER" id="PTHR43071">
    <property type="entry name" value="2-AMINO-4-HYDROXY-6-HYDROXYMETHYLDIHYDROPTERIDINE PYROPHOSPHOKINASE"/>
    <property type="match status" value="1"/>
</dbReference>
<dbReference type="PANTHER" id="PTHR43071:SF1">
    <property type="entry name" value="2-AMINO-4-HYDROXY-6-HYDROXYMETHYLDIHYDROPTERIDINE PYROPHOSPHOKINASE"/>
    <property type="match status" value="1"/>
</dbReference>
<dbReference type="Pfam" id="PF01288">
    <property type="entry name" value="HPPK"/>
    <property type="match status" value="1"/>
</dbReference>
<dbReference type="SUPFAM" id="SSF55083">
    <property type="entry name" value="6-hydroxymethyl-7,8-dihydropterin pyrophosphokinase, HPPK"/>
    <property type="match status" value="1"/>
</dbReference>
<dbReference type="PROSITE" id="PS00794">
    <property type="entry name" value="HPPK"/>
    <property type="match status" value="1"/>
</dbReference>
<reference key="1">
    <citation type="journal article" date="2003" name="Genome Res.">
        <title>Genome sequence of an M3 strain of Streptococcus pyogenes reveals a large-scale genomic rearrangement in invasive strains and new insights into phage evolution.</title>
        <authorList>
            <person name="Nakagawa I."/>
            <person name="Kurokawa K."/>
            <person name="Yamashita A."/>
            <person name="Nakata M."/>
            <person name="Tomiyasu Y."/>
            <person name="Okahashi N."/>
            <person name="Kawabata S."/>
            <person name="Yamazaki K."/>
            <person name="Shiba T."/>
            <person name="Yasunaga T."/>
            <person name="Hayashi H."/>
            <person name="Hattori M."/>
            <person name="Hamada S."/>
        </authorList>
    </citation>
    <scope>NUCLEOTIDE SEQUENCE [LARGE SCALE GENOMIC DNA]</scope>
    <source>
        <strain>SSI-1</strain>
    </source>
</reference>
<protein>
    <recommendedName>
        <fullName evidence="1">2-amino-4-hydroxy-6-hydroxymethyldihydropteridine pyrophosphokinase</fullName>
        <ecNumber evidence="1">2.7.6.3</ecNumber>
    </recommendedName>
    <alternativeName>
        <fullName evidence="1">6-hydroxymethyl-7,8-dihydropterin pyrophosphokinase</fullName>
        <shortName evidence="1">PPPK</shortName>
    </alternativeName>
    <alternativeName>
        <fullName evidence="1">7,8-dihydro-6-hydroxymethylpterin-pyrophosphokinase</fullName>
        <shortName evidence="1">HPPK</shortName>
    </alternativeName>
</protein>
<gene>
    <name type="primary">folK</name>
    <name type="ordered locus">SPs0962</name>
</gene>
<keyword id="KW-0067">ATP-binding</keyword>
<keyword id="KW-0289">Folate biosynthesis</keyword>
<keyword id="KW-0418">Kinase</keyword>
<keyword id="KW-0547">Nucleotide-binding</keyword>
<keyword id="KW-0808">Transferase</keyword>
<accession>P0DB11</accession>
<accession>Q8K7K6</accession>
<comment type="function">
    <text evidence="1">Catalyzes the transfer of pyrophosphate from adenosine triphosphate (ATP) to 6-hydroxymethyl-7,8-dihydropterin, an enzymatic step in folate biosynthesis pathway.</text>
</comment>
<comment type="catalytic activity">
    <reaction evidence="1">
        <text>6-hydroxymethyl-7,8-dihydropterin + ATP = (7,8-dihydropterin-6-yl)methyl diphosphate + AMP + H(+)</text>
        <dbReference type="Rhea" id="RHEA:11412"/>
        <dbReference type="ChEBI" id="CHEBI:15378"/>
        <dbReference type="ChEBI" id="CHEBI:30616"/>
        <dbReference type="ChEBI" id="CHEBI:44841"/>
        <dbReference type="ChEBI" id="CHEBI:72950"/>
        <dbReference type="ChEBI" id="CHEBI:456215"/>
        <dbReference type="EC" id="2.7.6.3"/>
    </reaction>
</comment>
<comment type="pathway">
    <text evidence="1">Cofactor biosynthesis; tetrahydrofolate biosynthesis; 2-amino-4-hydroxy-6-hydroxymethyl-7,8-dihydropteridine diphosphate from 7,8-dihydroneopterin triphosphate: step 4/4.</text>
</comment>
<comment type="similarity">
    <text evidence="2">Belongs to the HPPK family.</text>
</comment>
<sequence length="162" mass="18374">MTIVYLSLGTNMGDRAAYLQKALEALADLPQTRLLAQSSIYETTAWGKTSQADFLNMAYQLDTQLTAADFLKETQAIEQSLGRVRHEKWGSRTIDIDILLFGEEVYDTKELKVPHPYMTERAFVLIPLLELQPDLKLPPNHKLLRDYLAALDQSDITLFSAQ</sequence>
<proteinExistence type="inferred from homology"/>
<evidence type="ECO:0000250" key="1">
    <source>
        <dbReference type="UniProtKB" id="P26281"/>
    </source>
</evidence>
<evidence type="ECO:0000305" key="2"/>
<organism>
    <name type="scientific">Streptococcus pyogenes serotype M3 (strain SSI-1)</name>
    <dbReference type="NCBI Taxonomy" id="193567"/>
    <lineage>
        <taxon>Bacteria</taxon>
        <taxon>Bacillati</taxon>
        <taxon>Bacillota</taxon>
        <taxon>Bacilli</taxon>
        <taxon>Lactobacillales</taxon>
        <taxon>Streptococcaceae</taxon>
        <taxon>Streptococcus</taxon>
    </lineage>
</organism>
<feature type="chain" id="PRO_0000411343" description="2-amino-4-hydroxy-6-hydroxymethyldihydropteridine pyrophosphokinase">
    <location>
        <begin position="1"/>
        <end position="162"/>
    </location>
</feature>